<proteinExistence type="inferred from homology"/>
<reference key="1">
    <citation type="journal article" date="2008" name="Nat. Biotechnol.">
        <title>Genome sequencing and analysis of the filamentous fungus Penicillium chrysogenum.</title>
        <authorList>
            <person name="van den Berg M.A."/>
            <person name="Albang R."/>
            <person name="Albermann K."/>
            <person name="Badger J.H."/>
            <person name="Daran J.-M."/>
            <person name="Driessen A.J.M."/>
            <person name="Garcia-Estrada C."/>
            <person name="Fedorova N.D."/>
            <person name="Harris D.M."/>
            <person name="Heijne W.H.M."/>
            <person name="Joardar V.S."/>
            <person name="Kiel J.A.K.W."/>
            <person name="Kovalchuk A."/>
            <person name="Martin J.F."/>
            <person name="Nierman W.C."/>
            <person name="Nijland J.G."/>
            <person name="Pronk J.T."/>
            <person name="Roubos J.A."/>
            <person name="van der Klei I.J."/>
            <person name="van Peij N.N.M.E."/>
            <person name="Veenhuis M."/>
            <person name="von Doehren H."/>
            <person name="Wagner C."/>
            <person name="Wortman J.R."/>
            <person name="Bovenberg R.A.L."/>
        </authorList>
    </citation>
    <scope>NUCLEOTIDE SEQUENCE [LARGE SCALE GENOMIC DNA]</scope>
    <source>
        <strain>ATCC 28089 / DSM 1075 / NRRL 1951 / Wisconsin 54-1255</strain>
    </source>
</reference>
<accession>B6HEJ5</accession>
<gene>
    <name type="primary">coq4</name>
    <name type="ORF">Pc20g07630</name>
</gene>
<keyword id="KW-0456">Lyase</keyword>
<keyword id="KW-0472">Membrane</keyword>
<keyword id="KW-0479">Metal-binding</keyword>
<keyword id="KW-0496">Mitochondrion</keyword>
<keyword id="KW-0999">Mitochondrion inner membrane</keyword>
<keyword id="KW-1185">Reference proteome</keyword>
<keyword id="KW-0809">Transit peptide</keyword>
<keyword id="KW-0831">Ubiquinone biosynthesis</keyword>
<keyword id="KW-0862">Zinc</keyword>
<feature type="transit peptide" description="Mitochondrion" evidence="1">
    <location>
        <begin position="1"/>
        <end position="22"/>
    </location>
</feature>
<feature type="chain" id="PRO_0000388126" description="Ubiquinone biosynthesis protein coq4, mitochondrial">
    <location>
        <begin position="23"/>
        <end position="284"/>
    </location>
</feature>
<feature type="binding site" evidence="1">
    <location>
        <position position="165"/>
    </location>
    <ligand>
        <name>Zn(2+)</name>
        <dbReference type="ChEBI" id="CHEBI:29105"/>
    </ligand>
</feature>
<feature type="binding site" evidence="1">
    <location>
        <position position="166"/>
    </location>
    <ligand>
        <name>Zn(2+)</name>
        <dbReference type="ChEBI" id="CHEBI:29105"/>
    </ligand>
</feature>
<feature type="binding site" evidence="1">
    <location>
        <position position="169"/>
    </location>
    <ligand>
        <name>Zn(2+)</name>
        <dbReference type="ChEBI" id="CHEBI:29105"/>
    </ligand>
</feature>
<feature type="binding site" evidence="1">
    <location>
        <position position="181"/>
    </location>
    <ligand>
        <name>Zn(2+)</name>
        <dbReference type="ChEBI" id="CHEBI:29105"/>
    </ligand>
</feature>
<sequence length="284" mass="32410">MSVLGRRGAIELRALTASSNLSASTLRPFSVLNRPPPNYPGHVPLTTIERGALALGSAIGSLINPRRADLIAALGEATATPFFIYRLRDAMLSDPTGRRILRDRPRITSETLNMTHLRTLPENSVGRTYAKWLDREGVSPDTRDNVQYIDNEECAYVMQRYRECHDFYHAVTGLPIFVEGELALKALEFLNTLLPMTGLSLFAFVRMKPAEKERFLTLHLPWAIRSGLGSKELINVYWEEVLEKDVDELRAELNIERPPDLREIRKMIRQQQKREKERQQQASN</sequence>
<protein>
    <recommendedName>
        <fullName evidence="1">Ubiquinone biosynthesis protein coq4, mitochondrial</fullName>
    </recommendedName>
    <alternativeName>
        <fullName>4-hydroxy-3-methoxy-5-polyprenylbenzoate decarboxylase</fullName>
        <ecNumber evidence="1">4.1.1.130</ecNumber>
    </alternativeName>
    <alternativeName>
        <fullName evidence="1">Coenzyme Q biosynthesis protein 4</fullName>
    </alternativeName>
</protein>
<dbReference type="EC" id="4.1.1.130" evidence="1"/>
<dbReference type="EMBL" id="AM920435">
    <property type="protein sequence ID" value="CAP86092.1"/>
    <property type="molecule type" value="Genomic_DNA"/>
</dbReference>
<dbReference type="RefSeq" id="XP_002563286.1">
    <property type="nucleotide sequence ID" value="XM_002563240.1"/>
</dbReference>
<dbReference type="SMR" id="B6HEJ5"/>
<dbReference type="STRING" id="500485.B6HEJ5"/>
<dbReference type="GeneID" id="8313354"/>
<dbReference type="KEGG" id="pcs:N7525_009193"/>
<dbReference type="VEuPathDB" id="FungiDB:PCH_Pc20g07630"/>
<dbReference type="eggNOG" id="KOG3244">
    <property type="taxonomic scope" value="Eukaryota"/>
</dbReference>
<dbReference type="HOGENOM" id="CLU_061241_0_0_1"/>
<dbReference type="OMA" id="YYERHFH"/>
<dbReference type="OrthoDB" id="4249at2759"/>
<dbReference type="BioCyc" id="PCHR:PC20G07630-MONOMER"/>
<dbReference type="UniPathway" id="UPA00232"/>
<dbReference type="Proteomes" id="UP000000724">
    <property type="component" value="Contig Pc00c20"/>
</dbReference>
<dbReference type="GO" id="GO:0031314">
    <property type="term" value="C:extrinsic component of mitochondrial inner membrane"/>
    <property type="evidence" value="ECO:0007669"/>
    <property type="project" value="UniProtKB-UniRule"/>
</dbReference>
<dbReference type="GO" id="GO:0006744">
    <property type="term" value="P:ubiquinone biosynthetic process"/>
    <property type="evidence" value="ECO:0007669"/>
    <property type="project" value="UniProtKB-UniRule"/>
</dbReference>
<dbReference type="HAMAP" id="MF_03111">
    <property type="entry name" value="Coq4"/>
    <property type="match status" value="1"/>
</dbReference>
<dbReference type="InterPro" id="IPR007715">
    <property type="entry name" value="Coq4"/>
</dbReference>
<dbReference type="InterPro" id="IPR027540">
    <property type="entry name" value="Coq4_euk"/>
</dbReference>
<dbReference type="PANTHER" id="PTHR12922">
    <property type="entry name" value="UBIQUINONE BIOSYNTHESIS PROTEIN"/>
    <property type="match status" value="1"/>
</dbReference>
<dbReference type="PANTHER" id="PTHR12922:SF7">
    <property type="entry name" value="UBIQUINONE BIOSYNTHESIS PROTEIN COQ4 HOMOLOG, MITOCHONDRIAL"/>
    <property type="match status" value="1"/>
</dbReference>
<dbReference type="Pfam" id="PF05019">
    <property type="entry name" value="Coq4"/>
    <property type="match status" value="1"/>
</dbReference>
<organism>
    <name type="scientific">Penicillium rubens (strain ATCC 28089 / DSM 1075 / NRRL 1951 / Wisconsin 54-1255)</name>
    <name type="common">Penicillium chrysogenum</name>
    <dbReference type="NCBI Taxonomy" id="500485"/>
    <lineage>
        <taxon>Eukaryota</taxon>
        <taxon>Fungi</taxon>
        <taxon>Dikarya</taxon>
        <taxon>Ascomycota</taxon>
        <taxon>Pezizomycotina</taxon>
        <taxon>Eurotiomycetes</taxon>
        <taxon>Eurotiomycetidae</taxon>
        <taxon>Eurotiales</taxon>
        <taxon>Aspergillaceae</taxon>
        <taxon>Penicillium</taxon>
        <taxon>Penicillium chrysogenum species complex</taxon>
    </lineage>
</organism>
<name>COQ4_PENRW</name>
<comment type="function">
    <text evidence="1">Lyase that catalyzes the C1-decarboxylation of 4-hydroxy-3-methoxy-5-(all-trans-polyprenyl)benzoic acid into 2-methoxy-6-(all-trans-polyprenyl)phenol during ubiquinone biosynthesis.</text>
</comment>
<comment type="catalytic activity">
    <reaction evidence="1">
        <text>a 4-hydroxy-3-methoxy-5-(all-trans-polyprenyl)benzoate + H(+) = a 2-methoxy-6-(all-trans-polyprenyl)phenol + CO2</text>
        <dbReference type="Rhea" id="RHEA:81179"/>
        <dbReference type="Rhea" id="RHEA-COMP:9551"/>
        <dbReference type="Rhea" id="RHEA-COMP:10931"/>
        <dbReference type="ChEBI" id="CHEBI:15378"/>
        <dbReference type="ChEBI" id="CHEBI:16526"/>
        <dbReference type="ChEBI" id="CHEBI:62731"/>
        <dbReference type="ChEBI" id="CHEBI:84443"/>
        <dbReference type="EC" id="4.1.1.130"/>
    </reaction>
</comment>
<comment type="cofactor">
    <cofactor evidence="1">
        <name>Zn(2+)</name>
        <dbReference type="ChEBI" id="CHEBI:29105"/>
    </cofactor>
</comment>
<comment type="pathway">
    <text evidence="1">Cofactor biosynthesis; ubiquinone biosynthesis.</text>
</comment>
<comment type="subunit">
    <text evidence="1">Component of a multi-subunit COQ enzyme complex, composed of at least coq3, coq4, coq5, coq6, coq7 and coq9.</text>
</comment>
<comment type="subcellular location">
    <subcellularLocation>
        <location evidence="1">Mitochondrion inner membrane</location>
        <topology evidence="1">Peripheral membrane protein</topology>
        <orientation evidence="1">Matrix side</orientation>
    </subcellularLocation>
</comment>
<comment type="similarity">
    <text evidence="1">Belongs to the COQ4 family.</text>
</comment>
<evidence type="ECO:0000255" key="1">
    <source>
        <dbReference type="HAMAP-Rule" id="MF_03111"/>
    </source>
</evidence>